<accession>Q5NVH5</accession>
<dbReference type="EMBL" id="CR524764">
    <property type="status" value="NOT_ANNOTATED_CDS"/>
    <property type="molecule type" value="mRNA"/>
</dbReference>
<dbReference type="EMBL" id="CR545545">
    <property type="status" value="NOT_ANNOTATED_CDS"/>
    <property type="molecule type" value="mRNA"/>
</dbReference>
<dbReference type="EMBL" id="CR545546">
    <property type="status" value="NOT_ANNOTATED_CDS"/>
    <property type="molecule type" value="mRNA"/>
</dbReference>
<dbReference type="EMBL" id="CR765111">
    <property type="status" value="NOT_ANNOTATED_CDS"/>
    <property type="molecule type" value="mRNA"/>
</dbReference>
<dbReference type="EMBL" id="CR926060">
    <property type="protein sequence ID" value="CAI29688.1"/>
    <property type="molecule type" value="mRNA"/>
</dbReference>
<dbReference type="RefSeq" id="NP_001127106.2">
    <property type="nucleotide sequence ID" value="NM_001133634.2"/>
</dbReference>
<dbReference type="BMRB" id="Q5NVH5"/>
<dbReference type="SMR" id="Q5NVH5"/>
<dbReference type="FunCoup" id="Q5NVH5">
    <property type="interactions" value="806"/>
</dbReference>
<dbReference type="STRING" id="9601.ENSPPYP00000016551"/>
<dbReference type="Ensembl" id="ENSPPYT00000055783.1">
    <property type="protein sequence ID" value="ENSPPYP00000027652.1"/>
    <property type="gene ID" value="ENSPPYG00000014822.3"/>
</dbReference>
<dbReference type="GeneID" id="100174145"/>
<dbReference type="KEGG" id="pon:100174145"/>
<dbReference type="CTD" id="213"/>
<dbReference type="eggNOG" id="ENOG502R7EA">
    <property type="taxonomic scope" value="Eukaryota"/>
</dbReference>
<dbReference type="GeneTree" id="ENSGT00390000000113"/>
<dbReference type="HOGENOM" id="CLU_030161_0_0_1"/>
<dbReference type="InParanoid" id="Q5NVH5"/>
<dbReference type="OMA" id="ADPHACY"/>
<dbReference type="OrthoDB" id="9875082at2759"/>
<dbReference type="TreeFam" id="TF335561"/>
<dbReference type="Proteomes" id="UP000001595">
    <property type="component" value="Chromosome 4"/>
</dbReference>
<dbReference type="GO" id="GO:0072562">
    <property type="term" value="C:blood microparticle"/>
    <property type="evidence" value="ECO:0007669"/>
    <property type="project" value="TreeGrafter"/>
</dbReference>
<dbReference type="GO" id="GO:0005783">
    <property type="term" value="C:endoplasmic reticulum"/>
    <property type="evidence" value="ECO:0007669"/>
    <property type="project" value="Ensembl"/>
</dbReference>
<dbReference type="GO" id="GO:0070062">
    <property type="term" value="C:extracellular exosome"/>
    <property type="evidence" value="ECO:0007669"/>
    <property type="project" value="Ensembl"/>
</dbReference>
<dbReference type="GO" id="GO:0005794">
    <property type="term" value="C:Golgi apparatus"/>
    <property type="evidence" value="ECO:0007669"/>
    <property type="project" value="Ensembl"/>
</dbReference>
<dbReference type="GO" id="GO:0032991">
    <property type="term" value="C:protein-containing complex"/>
    <property type="evidence" value="ECO:0007669"/>
    <property type="project" value="Ensembl"/>
</dbReference>
<dbReference type="GO" id="GO:0003677">
    <property type="term" value="F:DNA binding"/>
    <property type="evidence" value="ECO:0007669"/>
    <property type="project" value="Ensembl"/>
</dbReference>
<dbReference type="GO" id="GO:1903981">
    <property type="term" value="F:enterobactin binding"/>
    <property type="evidence" value="ECO:0000250"/>
    <property type="project" value="UniProtKB"/>
</dbReference>
<dbReference type="GO" id="GO:0140272">
    <property type="term" value="F:exogenous protein binding"/>
    <property type="evidence" value="ECO:0007669"/>
    <property type="project" value="Ensembl"/>
</dbReference>
<dbReference type="GO" id="GO:0005504">
    <property type="term" value="F:fatty acid binding"/>
    <property type="evidence" value="ECO:0007669"/>
    <property type="project" value="Ensembl"/>
</dbReference>
<dbReference type="GO" id="GO:0042802">
    <property type="term" value="F:identical protein binding"/>
    <property type="evidence" value="ECO:0007669"/>
    <property type="project" value="Ensembl"/>
</dbReference>
<dbReference type="GO" id="GO:0046872">
    <property type="term" value="F:metal ion binding"/>
    <property type="evidence" value="ECO:0007669"/>
    <property type="project" value="UniProtKB-KW"/>
</dbReference>
<dbReference type="GO" id="GO:0019825">
    <property type="term" value="F:oxygen binding"/>
    <property type="evidence" value="ECO:0007669"/>
    <property type="project" value="Ensembl"/>
</dbReference>
<dbReference type="GO" id="GO:0051087">
    <property type="term" value="F:protein-folding chaperone binding"/>
    <property type="evidence" value="ECO:0007669"/>
    <property type="project" value="Ensembl"/>
</dbReference>
<dbReference type="GO" id="GO:0030170">
    <property type="term" value="F:pyridoxal phosphate binding"/>
    <property type="evidence" value="ECO:0007669"/>
    <property type="project" value="Ensembl"/>
</dbReference>
<dbReference type="GO" id="GO:0015643">
    <property type="term" value="F:toxic substance binding"/>
    <property type="evidence" value="ECO:0007669"/>
    <property type="project" value="Ensembl"/>
</dbReference>
<dbReference type="GO" id="GO:0072732">
    <property type="term" value="P:cellular response to calcium ion starvation"/>
    <property type="evidence" value="ECO:0007669"/>
    <property type="project" value="Ensembl"/>
</dbReference>
<dbReference type="GO" id="GO:0051902">
    <property type="term" value="P:negative regulation of mitochondrial depolarization"/>
    <property type="evidence" value="ECO:0007669"/>
    <property type="project" value="Ensembl"/>
</dbReference>
<dbReference type="CDD" id="cd00015">
    <property type="entry name" value="ALBUMIN"/>
    <property type="match status" value="3"/>
</dbReference>
<dbReference type="FunFam" id="1.10.246.10:FF:000001">
    <property type="entry name" value="Serum albumin"/>
    <property type="match status" value="2"/>
</dbReference>
<dbReference type="FunFam" id="1.10.246.10:FF:000002">
    <property type="entry name" value="Serum albumin"/>
    <property type="match status" value="2"/>
</dbReference>
<dbReference type="FunFam" id="1.10.246.10:FF:000003">
    <property type="entry name" value="Serum albumin"/>
    <property type="match status" value="1"/>
</dbReference>
<dbReference type="FunFam" id="1.10.246.10:FF:000005">
    <property type="entry name" value="Serum albumin"/>
    <property type="match status" value="1"/>
</dbReference>
<dbReference type="Gene3D" id="1.10.246.10">
    <property type="match status" value="6"/>
</dbReference>
<dbReference type="InterPro" id="IPR000264">
    <property type="entry name" value="ALB/AFP/VDB"/>
</dbReference>
<dbReference type="InterPro" id="IPR020858">
    <property type="entry name" value="Serum_albumin-like"/>
</dbReference>
<dbReference type="InterPro" id="IPR021177">
    <property type="entry name" value="Serum_albumin/AFP/Afamin"/>
</dbReference>
<dbReference type="InterPro" id="IPR020857">
    <property type="entry name" value="Serum_albumin_CS"/>
</dbReference>
<dbReference type="InterPro" id="IPR014760">
    <property type="entry name" value="Serum_albumin_N"/>
</dbReference>
<dbReference type="PANTHER" id="PTHR11385:SF15">
    <property type="entry name" value="ALBUMIN"/>
    <property type="match status" value="1"/>
</dbReference>
<dbReference type="PANTHER" id="PTHR11385">
    <property type="entry name" value="SERUM ALBUMIN-RELATED"/>
    <property type="match status" value="1"/>
</dbReference>
<dbReference type="Pfam" id="PF00273">
    <property type="entry name" value="Serum_albumin"/>
    <property type="match status" value="3"/>
</dbReference>
<dbReference type="PIRSF" id="PIRSF002520">
    <property type="entry name" value="Serum_albumin_subgroup"/>
    <property type="match status" value="1"/>
</dbReference>
<dbReference type="PRINTS" id="PR00802">
    <property type="entry name" value="SERUMALBUMIN"/>
</dbReference>
<dbReference type="SMART" id="SM00103">
    <property type="entry name" value="ALBUMIN"/>
    <property type="match status" value="3"/>
</dbReference>
<dbReference type="SUPFAM" id="SSF48552">
    <property type="entry name" value="Serum albumin-like"/>
    <property type="match status" value="3"/>
</dbReference>
<dbReference type="PROSITE" id="PS00212">
    <property type="entry name" value="ALBUMIN_1"/>
    <property type="match status" value="3"/>
</dbReference>
<dbReference type="PROSITE" id="PS51438">
    <property type="entry name" value="ALBUMIN_2"/>
    <property type="match status" value="3"/>
</dbReference>
<comment type="function">
    <text evidence="1 2">Binds water, Ca(2+), Na(+), K(+), fatty acids, hormones, bilirubin and drugs. Its main function is the regulation of the colloidal osmotic pressure of blood. Major zinc transporter in plasma, typically binds about 80% of all plasma zinc (By similarity). Major calcium and magnesium transporter in plasma, binds approximately 45% of circulating calcium and magnesium in plasma (By similarity). Potentially has more than two calcium-binding sites and might additionally bind calcium in a non-specific manner (By similarity). The shared binding site between zinc and calcium at residue Asp-273 suggests a crosstalk between zinc and calcium transport in the blood (By similarity). The rank order of affinity is zinc &gt; calcium &gt; magnesium (By similarity). Binds to the bacterial siderophore enterobactin and inhibits enterobactin-mediated iron uptake of E.coli from ferric transferrin, and may thereby limit the utilization of iron and growth of enteric bacteria such as E.coli (By similarity). Does not prevent iron uptake by the bacterial siderophore aerobactin (By similarity).</text>
</comment>
<comment type="subunit">
    <text evidence="1 4">Interacts with FCGRT; this interaction regulates ALB homeostasis (By similarity). Interacts with TASOR (By similarity). In plasma, occurs in a covalently-linked complex with chromophore-bound alpha-1-microglobulin; this interaction does not prevent fatty acid binding to ALB.</text>
</comment>
<comment type="subcellular location">
    <subcellularLocation>
        <location>Secreted</location>
    </subcellularLocation>
</comment>
<comment type="tissue specificity">
    <text>Plasma.</text>
</comment>
<comment type="PTM">
    <text evidence="1">Phosphorylated by FAM20C in the extracellular medium.</text>
</comment>
<comment type="similarity">
    <text evidence="6">Belongs to the ALB/AFP/VDB family.</text>
</comment>
<protein>
    <recommendedName>
        <fullName>Albumin</fullName>
    </recommendedName>
</protein>
<keyword id="KW-0106">Calcium</keyword>
<keyword id="KW-0165">Cleavage on pair of basic residues</keyword>
<keyword id="KW-0186">Copper</keyword>
<keyword id="KW-1015">Disulfide bond</keyword>
<keyword id="KW-0446">Lipid-binding</keyword>
<keyword id="KW-0479">Metal-binding</keyword>
<keyword id="KW-0488">Methylation</keyword>
<keyword id="KW-0597">Phosphoprotein</keyword>
<keyword id="KW-1185">Reference proteome</keyword>
<keyword id="KW-0677">Repeat</keyword>
<keyword id="KW-0964">Secreted</keyword>
<keyword id="KW-0732">Signal</keyword>
<keyword id="KW-0862">Zinc</keyword>
<proteinExistence type="evidence at transcript level"/>
<reference key="1">
    <citation type="submission" date="2004-11" db="EMBL/GenBank/DDBJ databases">
        <authorList>
            <consortium name="The German cDNA consortium"/>
        </authorList>
    </citation>
    <scope>NUCLEOTIDE SEQUENCE [LARGE SCALE MRNA]</scope>
    <source>
        <tissue>Brain cortex</tissue>
        <tissue>Liver</tissue>
    </source>
</reference>
<name>ALBU_PONAB</name>
<feature type="signal peptide" evidence="5">
    <location>
        <begin position="1"/>
        <end position="18"/>
    </location>
</feature>
<feature type="propeptide" id="PRO_0000280759" evidence="3">
    <location>
        <begin position="19"/>
        <end position="24"/>
    </location>
</feature>
<feature type="chain" id="PRO_0000280760" description="Albumin">
    <location>
        <begin position="25"/>
        <end position="609"/>
    </location>
</feature>
<feature type="domain" description="Albumin 1" evidence="6">
    <location>
        <begin position="19"/>
        <end position="210"/>
    </location>
</feature>
<feature type="domain" description="Albumin 2" evidence="6">
    <location>
        <begin position="211"/>
        <end position="403"/>
    </location>
</feature>
<feature type="domain" description="Albumin 3" evidence="6">
    <location>
        <begin position="404"/>
        <end position="601"/>
    </location>
</feature>
<feature type="binding site" evidence="3">
    <location>
        <position position="27"/>
    </location>
    <ligand>
        <name>Cu cation</name>
        <dbReference type="ChEBI" id="CHEBI:23378"/>
    </ligand>
</feature>
<feature type="binding site" evidence="2">
    <location>
        <position position="30"/>
    </location>
    <ligand>
        <name>Ca(2+)</name>
        <dbReference type="ChEBI" id="CHEBI:29108"/>
        <label>1</label>
    </ligand>
</feature>
<feature type="binding site" evidence="2">
    <location>
        <position position="37"/>
    </location>
    <ligand>
        <name>Ca(2+)</name>
        <dbReference type="ChEBI" id="CHEBI:29108"/>
        <label>2</label>
    </ligand>
</feature>
<feature type="binding site" evidence="1">
    <location>
        <position position="91"/>
    </location>
    <ligand>
        <name>Zn(2+)</name>
        <dbReference type="ChEBI" id="CHEBI:29105"/>
    </ligand>
</feature>
<feature type="binding site" evidence="1">
    <location>
        <position position="264"/>
    </location>
    <ligand>
        <name>(4Z,15Z)-bilirubin IXalpha</name>
        <dbReference type="ChEBI" id="CHEBI:57977"/>
    </ligand>
</feature>
<feature type="binding site" evidence="2">
    <location>
        <position position="268"/>
    </location>
    <ligand>
        <name>Ca(2+)</name>
        <dbReference type="ChEBI" id="CHEBI:29108"/>
        <label>1</label>
    </ligand>
</feature>
<feature type="binding site" evidence="1">
    <location>
        <position position="271"/>
    </location>
    <ligand>
        <name>Zn(2+)</name>
        <dbReference type="ChEBI" id="CHEBI:29105"/>
    </ligand>
</feature>
<feature type="binding site" evidence="2">
    <location>
        <position position="273"/>
    </location>
    <ligand>
        <name>Ca(2+)</name>
        <dbReference type="ChEBI" id="CHEBI:29108"/>
        <label>1</label>
    </ligand>
</feature>
<feature type="binding site" evidence="1">
    <location>
        <position position="273"/>
    </location>
    <ligand>
        <name>Zn(2+)</name>
        <dbReference type="ChEBI" id="CHEBI:29105"/>
    </ligand>
</feature>
<feature type="binding site" evidence="2">
    <location>
        <position position="276"/>
    </location>
    <ligand>
        <name>Ca(2+)</name>
        <dbReference type="ChEBI" id="CHEBI:29108"/>
        <label>1</label>
    </ligand>
</feature>
<feature type="binding site" evidence="2">
    <location>
        <position position="279"/>
    </location>
    <ligand>
        <name>Ca(2+)</name>
        <dbReference type="ChEBI" id="CHEBI:29108"/>
        <label>2</label>
    </ligand>
</feature>
<feature type="binding site" evidence="2">
    <location>
        <position position="283"/>
    </location>
    <ligand>
        <name>Ca(2+)</name>
        <dbReference type="ChEBI" id="CHEBI:29108"/>
        <label>2</label>
    </ligand>
</feature>
<feature type="modified residue" description="Phosphoserine" evidence="1">
    <location>
        <position position="29"/>
    </location>
</feature>
<feature type="modified residue" description="Phosphoserine" evidence="1">
    <location>
        <position position="82"/>
    </location>
</feature>
<feature type="modified residue" description="Phosphoserine" evidence="1">
    <location>
        <position position="89"/>
    </location>
</feature>
<feature type="modified residue" description="Phosphothreonine" evidence="1">
    <location>
        <position position="107"/>
    </location>
</feature>
<feature type="modified residue" description="N6-succinyllysine" evidence="4">
    <location>
        <position position="229"/>
    </location>
</feature>
<feature type="modified residue" description="Phosphoserine" evidence="4">
    <location>
        <position position="297"/>
    </location>
</feature>
<feature type="modified residue" description="Phosphoserine" evidence="1">
    <location>
        <position position="443"/>
    </location>
</feature>
<feature type="modified residue" description="Phosphothreonine" evidence="1">
    <location>
        <position position="444"/>
    </location>
</feature>
<feature type="modified residue" description="Phosphothreonine" evidence="1">
    <location>
        <position position="446"/>
    </location>
</feature>
<feature type="modified residue" description="N6-succinyllysine" evidence="4">
    <location>
        <position position="460"/>
    </location>
</feature>
<feature type="modified residue" description="Phosphoserine" evidence="1">
    <location>
        <position position="513"/>
    </location>
</feature>
<feature type="modified residue" description="N6-succinyllysine" evidence="4">
    <location>
        <position position="543"/>
    </location>
</feature>
<feature type="modified residue" description="N6-methyllysine" evidence="1">
    <location>
        <position position="558"/>
    </location>
</feature>
<feature type="modified residue" description="Phosphothreonine" evidence="3">
    <location>
        <position position="570"/>
    </location>
</feature>
<feature type="modified residue" description="N6-succinyllysine" evidence="4">
    <location>
        <position position="588"/>
    </location>
</feature>
<feature type="disulfide bond" evidence="6">
    <location>
        <begin position="77"/>
        <end position="86"/>
    </location>
</feature>
<feature type="disulfide bond" evidence="6">
    <location>
        <begin position="99"/>
        <end position="115"/>
    </location>
</feature>
<feature type="disulfide bond" evidence="6">
    <location>
        <begin position="114"/>
        <end position="125"/>
    </location>
</feature>
<feature type="disulfide bond" evidence="6">
    <location>
        <begin position="148"/>
        <end position="193"/>
    </location>
</feature>
<feature type="disulfide bond" evidence="6">
    <location>
        <begin position="192"/>
        <end position="201"/>
    </location>
</feature>
<feature type="disulfide bond" evidence="6">
    <location>
        <begin position="224"/>
        <end position="270"/>
    </location>
</feature>
<feature type="disulfide bond" evidence="6">
    <location>
        <begin position="269"/>
        <end position="277"/>
    </location>
</feature>
<feature type="disulfide bond" evidence="6">
    <location>
        <begin position="289"/>
        <end position="303"/>
    </location>
</feature>
<feature type="disulfide bond" evidence="6">
    <location>
        <begin position="302"/>
        <end position="313"/>
    </location>
</feature>
<feature type="disulfide bond" evidence="6">
    <location>
        <begin position="340"/>
        <end position="385"/>
    </location>
</feature>
<feature type="disulfide bond" evidence="6">
    <location>
        <begin position="384"/>
        <end position="393"/>
    </location>
</feature>
<feature type="disulfide bond" evidence="6">
    <location>
        <begin position="416"/>
        <end position="462"/>
    </location>
</feature>
<feature type="disulfide bond" evidence="6">
    <location>
        <begin position="461"/>
        <end position="472"/>
    </location>
</feature>
<feature type="disulfide bond" evidence="6">
    <location>
        <begin position="485"/>
        <end position="501"/>
    </location>
</feature>
<feature type="disulfide bond" evidence="6">
    <location>
        <begin position="500"/>
        <end position="511"/>
    </location>
</feature>
<feature type="disulfide bond" evidence="6">
    <location>
        <begin position="538"/>
        <end position="583"/>
    </location>
</feature>
<feature type="disulfide bond" evidence="6">
    <location>
        <begin position="582"/>
        <end position="591"/>
    </location>
</feature>
<feature type="sequence conflict" description="In Ref. 1; CAI29688." evidence="7" ref="1">
    <original>K</original>
    <variation>N</variation>
    <location>
        <position position="42"/>
    </location>
</feature>
<feature type="sequence conflict" description="In Ref. 1; CAI29688." evidence="7" ref="1">
    <original>V</original>
    <variation>K</variation>
    <location>
        <position position="183"/>
    </location>
</feature>
<feature type="sequence conflict" description="In Ref. 1; CAI29688." evidence="7" ref="1">
    <original>L</original>
    <variation>I</variation>
    <location>
        <position position="314"/>
    </location>
</feature>
<feature type="sequence conflict" description="In Ref. 1; CAI29688." evidence="7" ref="1">
    <original>E</original>
    <variation>A</variation>
    <location>
        <position position="430"/>
    </location>
</feature>
<feature type="sequence conflict" description="In Ref. 1; CAI29688." evidence="7" ref="1">
    <original>P</original>
    <variation>A</variation>
    <location>
        <position position="467"/>
    </location>
</feature>
<feature type="sequence conflict" description="In Ref. 1; CAI29688." evidence="7" ref="1">
    <original>E</original>
    <variation>D</variation>
    <location>
        <position position="495"/>
    </location>
</feature>
<feature type="sequence conflict" description="In Ref. 1; CAI29688." evidence="7" ref="1">
    <original>D</original>
    <variation>E</variation>
    <location>
        <position position="529"/>
    </location>
</feature>
<feature type="sequence conflict" description="In Ref. 1; CAI29688." evidence="7" ref="1">
    <original>T</original>
    <variation>A</variation>
    <location>
        <position position="570"/>
    </location>
</feature>
<feature type="sequence conflict" description="In Ref. 1; CAI29688." evidence="7" ref="1">
    <original>E</original>
    <variation>D</variation>
    <location>
        <position position="573"/>
    </location>
</feature>
<sequence length="609" mass="69480">MKWVTFISLLFLFSSAYSRGVFRRDAHKSEVAHRFKDLGEEKFKALVLIAFAQYLQQCPFEDHVKLVNEVTEFAKTCVADESAENCDKSLHTLFGDKLCTVATLRETYGEMADCCAKQEPERNECFLQHKDDNPNLPRLVRPEVDVMCTAFHDNEETFLKKYLYEIARRHPYFYAPELLFFAVRYKAAFTECCQAADKAACLLPKLDELRDEGKASSAKQRLKCASLQKFGERAFKAWAVARLSQRFPKAEFAEVSKLVTDLTKVHTECCHGDLLECADDRADLAKYICENQDSISSKLKECCEKPLLEKSHCLAEVENDEMPADLPSLAADFVESKDVCKNYAEAKDVFLGMFLYEYARRHPDYSVVLLLRLAKTYETTLEKCCAAADPHECYAKVFDEFKPLVEEPQNLIKQNCELFEQLGEYKFQNELLVRYTKKVPQVSTPTLVEVSRNLGKVGSKCCKHPEPKRMPCAEDYLSVVLNQLCVLHEKTPVSERVTKCCTESLVNRRPCFSALEVDETYVPKEFNADTFTFHADICTLSEKERQIKKQTALVELVKHKPKATKEQLKTVMEDFAAFVEKCCKADDKETCFAEEGKKLVAASQAALGL</sequence>
<organism>
    <name type="scientific">Pongo abelii</name>
    <name type="common">Sumatran orangutan</name>
    <name type="synonym">Pongo pygmaeus abelii</name>
    <dbReference type="NCBI Taxonomy" id="9601"/>
    <lineage>
        <taxon>Eukaryota</taxon>
        <taxon>Metazoa</taxon>
        <taxon>Chordata</taxon>
        <taxon>Craniata</taxon>
        <taxon>Vertebrata</taxon>
        <taxon>Euteleostomi</taxon>
        <taxon>Mammalia</taxon>
        <taxon>Eutheria</taxon>
        <taxon>Euarchontoglires</taxon>
        <taxon>Primates</taxon>
        <taxon>Haplorrhini</taxon>
        <taxon>Catarrhini</taxon>
        <taxon>Hominidae</taxon>
        <taxon>Pongo</taxon>
    </lineage>
</organism>
<gene>
    <name type="primary">ALB</name>
</gene>
<evidence type="ECO:0000250" key="1">
    <source>
        <dbReference type="UniProtKB" id="P02768"/>
    </source>
</evidence>
<evidence type="ECO:0000250" key="2">
    <source>
        <dbReference type="UniProtKB" id="P02769"/>
    </source>
</evidence>
<evidence type="ECO:0000250" key="3">
    <source>
        <dbReference type="UniProtKB" id="P02770"/>
    </source>
</evidence>
<evidence type="ECO:0000250" key="4">
    <source>
        <dbReference type="UniProtKB" id="P07724"/>
    </source>
</evidence>
<evidence type="ECO:0000255" key="5"/>
<evidence type="ECO:0000255" key="6">
    <source>
        <dbReference type="PROSITE-ProRule" id="PRU00769"/>
    </source>
</evidence>
<evidence type="ECO:0000305" key="7"/>